<proteinExistence type="evidence at protein level"/>
<evidence type="ECO:0000256" key="1">
    <source>
        <dbReference type="SAM" id="MobiDB-lite"/>
    </source>
</evidence>
<evidence type="ECO:0000269" key="2">
    <source>
    </source>
</evidence>
<evidence type="ECO:0000269" key="3">
    <source>
    </source>
</evidence>
<evidence type="ECO:0000269" key="4">
    <source>
    </source>
</evidence>
<evidence type="ECO:0000269" key="5">
    <source>
    </source>
</evidence>
<evidence type="ECO:0000269" key="6">
    <source>
    </source>
</evidence>
<evidence type="ECO:0000269" key="7">
    <source>
    </source>
</evidence>
<evidence type="ECO:0000269" key="8">
    <source>
    </source>
</evidence>
<evidence type="ECO:0000269" key="9">
    <source>
    </source>
</evidence>
<evidence type="ECO:0000305" key="10"/>
<reference key="1">
    <citation type="journal article" date="1999" name="Plant J.">
        <title>Arabidopsis thaliana proteins related to the yeast SIP and SNF4 interact with AKINalpha1, an SNF1-like protein kinase.</title>
        <authorList>
            <person name="Bouly J.-P."/>
            <person name="Gissot L."/>
            <person name="Lessard P."/>
            <person name="Kreis M."/>
            <person name="Thomas M."/>
        </authorList>
    </citation>
    <scope>NUCLEOTIDE SEQUENCE [MRNA]</scope>
    <scope>INTERACTION WITH AKIN11 AND AKING1</scope>
    <scope>INDUCTION</scope>
    <scope>TISSUE SPECIFICITY</scope>
    <source>
        <strain>cv. Columbia</strain>
    </source>
</reference>
<reference key="2">
    <citation type="journal article" date="2000" name="Nature">
        <title>Sequence and analysis of chromosome 5 of the plant Arabidopsis thaliana.</title>
        <authorList>
            <person name="Tabata S."/>
            <person name="Kaneko T."/>
            <person name="Nakamura Y."/>
            <person name="Kotani H."/>
            <person name="Kato T."/>
            <person name="Asamizu E."/>
            <person name="Miyajima N."/>
            <person name="Sasamoto S."/>
            <person name="Kimura T."/>
            <person name="Hosouchi T."/>
            <person name="Kawashima K."/>
            <person name="Kohara M."/>
            <person name="Matsumoto M."/>
            <person name="Matsuno A."/>
            <person name="Muraki A."/>
            <person name="Nakayama S."/>
            <person name="Nakazaki N."/>
            <person name="Naruo K."/>
            <person name="Okumura S."/>
            <person name="Shinpo S."/>
            <person name="Takeuchi C."/>
            <person name="Wada T."/>
            <person name="Watanabe A."/>
            <person name="Yamada M."/>
            <person name="Yasuda M."/>
            <person name="Sato S."/>
            <person name="de la Bastide M."/>
            <person name="Huang E."/>
            <person name="Spiegel L."/>
            <person name="Gnoj L."/>
            <person name="O'Shaughnessy A."/>
            <person name="Preston R."/>
            <person name="Habermann K."/>
            <person name="Murray J."/>
            <person name="Johnson D."/>
            <person name="Rohlfing T."/>
            <person name="Nelson J."/>
            <person name="Stoneking T."/>
            <person name="Pepin K."/>
            <person name="Spieth J."/>
            <person name="Sekhon M."/>
            <person name="Armstrong J."/>
            <person name="Becker M."/>
            <person name="Belter E."/>
            <person name="Cordum H."/>
            <person name="Cordes M."/>
            <person name="Courtney L."/>
            <person name="Courtney W."/>
            <person name="Dante M."/>
            <person name="Du H."/>
            <person name="Edwards J."/>
            <person name="Fryman J."/>
            <person name="Haakensen B."/>
            <person name="Lamar E."/>
            <person name="Latreille P."/>
            <person name="Leonard S."/>
            <person name="Meyer R."/>
            <person name="Mulvaney E."/>
            <person name="Ozersky P."/>
            <person name="Riley A."/>
            <person name="Strowmatt C."/>
            <person name="Wagner-McPherson C."/>
            <person name="Wollam A."/>
            <person name="Yoakum M."/>
            <person name="Bell M."/>
            <person name="Dedhia N."/>
            <person name="Parnell L."/>
            <person name="Shah R."/>
            <person name="Rodriguez M."/>
            <person name="Hoon See L."/>
            <person name="Vil D."/>
            <person name="Baker J."/>
            <person name="Kirchoff K."/>
            <person name="Toth K."/>
            <person name="King L."/>
            <person name="Bahret A."/>
            <person name="Miller B."/>
            <person name="Marra M.A."/>
            <person name="Martienssen R."/>
            <person name="McCombie W.R."/>
            <person name="Wilson R.K."/>
            <person name="Murphy G."/>
            <person name="Bancroft I."/>
            <person name="Volckaert G."/>
            <person name="Wambutt R."/>
            <person name="Duesterhoeft A."/>
            <person name="Stiekema W."/>
            <person name="Pohl T."/>
            <person name="Entian K.-D."/>
            <person name="Terryn N."/>
            <person name="Hartley N."/>
            <person name="Bent E."/>
            <person name="Johnson S."/>
            <person name="Langham S.-A."/>
            <person name="McCullagh B."/>
            <person name="Robben J."/>
            <person name="Grymonprez B."/>
            <person name="Zimmermann W."/>
            <person name="Ramsperger U."/>
            <person name="Wedler H."/>
            <person name="Balke K."/>
            <person name="Wedler E."/>
            <person name="Peters S."/>
            <person name="van Staveren M."/>
            <person name="Dirkse W."/>
            <person name="Mooijman P."/>
            <person name="Klein Lankhorst R."/>
            <person name="Weitzenegger T."/>
            <person name="Bothe G."/>
            <person name="Rose M."/>
            <person name="Hauf J."/>
            <person name="Berneiser S."/>
            <person name="Hempel S."/>
            <person name="Feldpausch M."/>
            <person name="Lamberth S."/>
            <person name="Villarroel R."/>
            <person name="Gielen J."/>
            <person name="Ardiles W."/>
            <person name="Bents O."/>
            <person name="Lemcke K."/>
            <person name="Kolesov G."/>
            <person name="Mayer K.F.X."/>
            <person name="Rudd S."/>
            <person name="Schoof H."/>
            <person name="Schueller C."/>
            <person name="Zaccaria P."/>
            <person name="Mewes H.-W."/>
            <person name="Bevan M."/>
            <person name="Fransz P.F."/>
        </authorList>
    </citation>
    <scope>NUCLEOTIDE SEQUENCE [LARGE SCALE GENOMIC DNA]</scope>
    <source>
        <strain>cv. Columbia</strain>
    </source>
</reference>
<reference key="3">
    <citation type="journal article" date="2017" name="Plant J.">
        <title>Araport11: a complete reannotation of the Arabidopsis thaliana reference genome.</title>
        <authorList>
            <person name="Cheng C.Y."/>
            <person name="Krishnakumar V."/>
            <person name="Chan A.P."/>
            <person name="Thibaud-Nissen F."/>
            <person name="Schobel S."/>
            <person name="Town C.D."/>
        </authorList>
    </citation>
    <scope>GENOME REANNOTATION</scope>
    <source>
        <strain>cv. Columbia</strain>
    </source>
</reference>
<reference key="4">
    <citation type="submission" date="2002-03" db="EMBL/GenBank/DDBJ databases">
        <title>Full-length cDNA from Arabidopsis thaliana.</title>
        <authorList>
            <person name="Brover V.V."/>
            <person name="Troukhan M.E."/>
            <person name="Alexandrov N.A."/>
            <person name="Lu Y.-P."/>
            <person name="Flavell R.B."/>
            <person name="Feldmann K.A."/>
        </authorList>
    </citation>
    <scope>NUCLEOTIDE SEQUENCE [LARGE SCALE MRNA]</scope>
</reference>
<reference key="5">
    <citation type="journal article" date="2001" name="EMBO Rep.">
        <title>Domain fusion between SNF1-related kinase subunits during plant evolution.</title>
        <authorList>
            <person name="Lumbreras V."/>
            <person name="Alba M.M."/>
            <person name="Kleinow T."/>
            <person name="Koncz C."/>
            <person name="Pages M."/>
        </authorList>
    </citation>
    <scope>DOMAIN KIS</scope>
</reference>
<reference key="6">
    <citation type="journal article" date="2006" name="Plant Physiol.">
        <title>AKINbetagamma contributes to SnRK1 heterotrimeric complexes and interacts with two proteins implicated in plant pathogen resistance through its KIS/GBD sequence.</title>
        <authorList>
            <person name="Gissot L."/>
            <person name="Polge C."/>
            <person name="Jossier M."/>
            <person name="Girin T."/>
            <person name="Bouly J.-P."/>
            <person name="Kreis M."/>
            <person name="Thomas M."/>
        </authorList>
    </citation>
    <scope>INTERACTION WITH SNF4</scope>
    <scope>COMPONENT OF A HETEROTRIMERIC COMPLEX</scope>
    <scope>SUBUNIT</scope>
</reference>
<reference key="7">
    <citation type="journal article" date="2007" name="Plant Cell">
        <title>N-myristoylation regulates the SnRK1 pathway in Arabidopsis.</title>
        <authorList>
            <person name="Pierre M."/>
            <person name="Traverso J.A."/>
            <person name="Boisson B."/>
            <person name="Domenichini S."/>
            <person name="Bouchez D."/>
            <person name="Giglione C."/>
            <person name="Meinnel T."/>
        </authorList>
    </citation>
    <scope>MYRISTOYLATION AT GLY-2</scope>
    <scope>MUTAGENESIS OF GLY-2</scope>
    <scope>SUBCELLULAR LOCATION</scope>
</reference>
<reference key="8">
    <citation type="journal article" date="2007" name="Trends Plant Sci.">
        <title>SNF1/AMPK/SnRK1 kinases, global regulators at the heart of energy control?</title>
        <authorList>
            <person name="Polge C."/>
            <person name="Thomas M."/>
        </authorList>
    </citation>
    <scope>REVIEW</scope>
</reference>
<reference key="9">
    <citation type="journal article" date="2013" name="PLoS ONE">
        <title>A novel role for Arabidopsis CBL1 in affecting plant responses to glucose and gibberellin during germination and seedling development.</title>
        <authorList>
            <person name="Li Z.Y."/>
            <person name="Xu Z.S."/>
            <person name="Chen Y."/>
            <person name="He G.Y."/>
            <person name="Yang G.X."/>
            <person name="Chen M."/>
            <person name="Li L.C."/>
            <person name="Ma Y.Z."/>
        </authorList>
    </citation>
    <scope>INTERACTION WITH CBL1</scope>
</reference>
<reference key="10">
    <citation type="journal article" date="2015" name="Plant J.">
        <title>SnRK1 from Arabidopsis thaliana is an atypical AMPK.</title>
        <authorList>
            <person name="Emanuelle S."/>
            <person name="Hossain M.I."/>
            <person name="Moller I.E."/>
            <person name="Pedersen H.L."/>
            <person name="van de Meene A.M."/>
            <person name="Doblin M.S."/>
            <person name="Koay A."/>
            <person name="Oakhill J.S."/>
            <person name="Scott J.W."/>
            <person name="Willats W.G."/>
            <person name="Kemp B.E."/>
            <person name="Bacic A."/>
            <person name="Gooley P.R."/>
            <person name="Stapleton D.I."/>
        </authorList>
    </citation>
    <scope>COMPONENT OF A HETEROTRIMERIC COMPLEX</scope>
    <scope>SUBUNIT</scope>
</reference>
<reference key="11">
    <citation type="journal article" date="2016" name="EXS">
        <title>Plant SnRK1 kinases: structure, regulation, and function.</title>
        <authorList>
            <person name="Margalha L."/>
            <person name="Valerio C."/>
            <person name="Baena-Gonzalez E."/>
        </authorList>
    </citation>
    <scope>REVIEW</scope>
</reference>
<reference key="12">
    <citation type="journal article" date="2016" name="Plant J.">
        <title>SUMOylation represses SnRK1 signaling in Arabidopsis.</title>
        <authorList>
            <person name="Crozet P."/>
            <person name="Margalha L."/>
            <person name="Butowt R."/>
            <person name="Fernandes N."/>
            <person name="Elias C.A."/>
            <person name="Orosa B."/>
            <person name="Tomanov K."/>
            <person name="Teige M."/>
            <person name="Bachmair A."/>
            <person name="Sadanandom A."/>
            <person name="Baena-Gonzalez E."/>
        </authorList>
    </citation>
    <scope>SUMOYLATION</scope>
</reference>
<reference key="13">
    <citation type="journal article" date="2018" name="J. Biol. Chem.">
        <title>The FCS-like zinc finger scaffold of the kinase SnRK1 is formed by the coordinated actions of the FLZ domain and intrinsically disordered regions.</title>
        <authorList>
            <person name="Jamsheer K M."/>
            <person name="Shukla B.N."/>
            <person name="Jindal S."/>
            <person name="Gopan N."/>
            <person name="Mannully C.T."/>
            <person name="Laxmi A."/>
        </authorList>
    </citation>
    <scope>INTERACTION WITH FLZ PROTEINS</scope>
</reference>
<keyword id="KW-0025">Alternative splicing</keyword>
<keyword id="KW-0067">ATP-binding</keyword>
<keyword id="KW-0119">Carbohydrate metabolism</keyword>
<keyword id="KW-1003">Cell membrane</keyword>
<keyword id="KW-0275">Fatty acid biosynthesis</keyword>
<keyword id="KW-0276">Fatty acid metabolism</keyword>
<keyword id="KW-0444">Lipid biosynthesis</keyword>
<keyword id="KW-0443">Lipid metabolism</keyword>
<keyword id="KW-0449">Lipoprotein</keyword>
<keyword id="KW-0472">Membrane</keyword>
<keyword id="KW-0519">Myristate</keyword>
<keyword id="KW-0534">Nitrate assimilation</keyword>
<keyword id="KW-0547">Nucleotide-binding</keyword>
<keyword id="KW-1185">Reference proteome</keyword>
<keyword id="KW-0832">Ubl conjugation</keyword>
<organism>
    <name type="scientific">Arabidopsis thaliana</name>
    <name type="common">Mouse-ear cress</name>
    <dbReference type="NCBI Taxonomy" id="3702"/>
    <lineage>
        <taxon>Eukaryota</taxon>
        <taxon>Viridiplantae</taxon>
        <taxon>Streptophyta</taxon>
        <taxon>Embryophyta</taxon>
        <taxon>Tracheophyta</taxon>
        <taxon>Spermatophyta</taxon>
        <taxon>Magnoliopsida</taxon>
        <taxon>eudicotyledons</taxon>
        <taxon>Gunneridae</taxon>
        <taxon>Pentapetalae</taxon>
        <taxon>rosids</taxon>
        <taxon>malvids</taxon>
        <taxon>Brassicales</taxon>
        <taxon>Brassicaceae</taxon>
        <taxon>Camelineae</taxon>
        <taxon>Arabidopsis</taxon>
    </lineage>
</organism>
<gene>
    <name type="primary">KINB1</name>
    <name type="ordered locus">At5g21170</name>
    <name type="ORF">T10F18.200</name>
</gene>
<dbReference type="EMBL" id="AJ132315">
    <property type="protein sequence ID" value="CAB64718.1"/>
    <property type="molecule type" value="mRNA"/>
</dbReference>
<dbReference type="EMBL" id="AC140977">
    <property type="protein sequence ID" value="AAO73894.1"/>
    <property type="molecule type" value="Genomic_DNA"/>
</dbReference>
<dbReference type="EMBL" id="CP002688">
    <property type="protein sequence ID" value="AED92944.1"/>
    <property type="molecule type" value="Genomic_DNA"/>
</dbReference>
<dbReference type="EMBL" id="AY088139">
    <property type="protein sequence ID" value="AAM65684.1"/>
    <property type="molecule type" value="mRNA"/>
</dbReference>
<dbReference type="RefSeq" id="NP_197615.1">
    <molecule id="Q84VQ1-1"/>
    <property type="nucleotide sequence ID" value="NM_122124.4"/>
</dbReference>
<dbReference type="SMR" id="Q84VQ1"/>
<dbReference type="BioGRID" id="17518">
    <property type="interactions" value="59"/>
</dbReference>
<dbReference type="FunCoup" id="Q84VQ1">
    <property type="interactions" value="2387"/>
</dbReference>
<dbReference type="IntAct" id="Q84VQ1">
    <property type="interactions" value="183"/>
</dbReference>
<dbReference type="STRING" id="3702.Q84VQ1"/>
<dbReference type="CAZy" id="CBM48">
    <property type="family name" value="Carbohydrate-Binding Module Family 48"/>
</dbReference>
<dbReference type="iPTMnet" id="Q84VQ1"/>
<dbReference type="ProteomicsDB" id="238221">
    <molecule id="Q84VQ1-1"/>
</dbReference>
<dbReference type="EnsemblPlants" id="AT5G21170.1">
    <molecule id="Q84VQ1-1"/>
    <property type="protein sequence ID" value="AT5G21170.1"/>
    <property type="gene ID" value="AT5G21170"/>
</dbReference>
<dbReference type="GeneID" id="832243"/>
<dbReference type="Gramene" id="AT5G21170.1">
    <molecule id="Q84VQ1-1"/>
    <property type="protein sequence ID" value="AT5G21170.1"/>
    <property type="gene ID" value="AT5G21170"/>
</dbReference>
<dbReference type="KEGG" id="ath:AT5G21170"/>
<dbReference type="Araport" id="AT5G21170"/>
<dbReference type="TAIR" id="AT5G21170">
    <property type="gene designation" value="AKINBETA1"/>
</dbReference>
<dbReference type="HOGENOM" id="CLU_070949_0_0_1"/>
<dbReference type="InParanoid" id="Q84VQ1"/>
<dbReference type="PhylomeDB" id="Q84VQ1"/>
<dbReference type="PRO" id="PR:Q84VQ1"/>
<dbReference type="Proteomes" id="UP000006548">
    <property type="component" value="Chromosome 5"/>
</dbReference>
<dbReference type="ExpressionAtlas" id="Q84VQ1">
    <property type="expression patterns" value="baseline and differential"/>
</dbReference>
<dbReference type="GO" id="GO:0009507">
    <property type="term" value="C:chloroplast"/>
    <property type="evidence" value="ECO:0007669"/>
    <property type="project" value="UniProtKB-ARBA"/>
</dbReference>
<dbReference type="GO" id="GO:0005886">
    <property type="term" value="C:plasma membrane"/>
    <property type="evidence" value="ECO:0007669"/>
    <property type="project" value="UniProtKB-SubCell"/>
</dbReference>
<dbReference type="GO" id="GO:0005524">
    <property type="term" value="F:ATP binding"/>
    <property type="evidence" value="ECO:0007669"/>
    <property type="project" value="UniProtKB-KW"/>
</dbReference>
<dbReference type="GO" id="GO:0006633">
    <property type="term" value="P:fatty acid biosynthetic process"/>
    <property type="evidence" value="ECO:0007669"/>
    <property type="project" value="UniProtKB-KW"/>
</dbReference>
<dbReference type="GO" id="GO:0042128">
    <property type="term" value="P:nitrate assimilation"/>
    <property type="evidence" value="ECO:0007669"/>
    <property type="project" value="UniProtKB-KW"/>
</dbReference>
<dbReference type="CDD" id="cd02859">
    <property type="entry name" value="E_set_AMPKbeta_like_N"/>
    <property type="match status" value="1"/>
</dbReference>
<dbReference type="Gene3D" id="6.20.250.60">
    <property type="match status" value="1"/>
</dbReference>
<dbReference type="Gene3D" id="2.60.40.10">
    <property type="entry name" value="Immunoglobulins"/>
    <property type="match status" value="1"/>
</dbReference>
<dbReference type="InterPro" id="IPR032640">
    <property type="entry name" value="AMPK1_CBM"/>
</dbReference>
<dbReference type="InterPro" id="IPR006828">
    <property type="entry name" value="ASC_dom"/>
</dbReference>
<dbReference type="InterPro" id="IPR037256">
    <property type="entry name" value="ASC_dom_sf"/>
</dbReference>
<dbReference type="InterPro" id="IPR013783">
    <property type="entry name" value="Ig-like_fold"/>
</dbReference>
<dbReference type="InterPro" id="IPR014756">
    <property type="entry name" value="Ig_E-set"/>
</dbReference>
<dbReference type="InterPro" id="IPR043554">
    <property type="entry name" value="KINB"/>
</dbReference>
<dbReference type="PANTHER" id="PTHR46316">
    <property type="entry name" value="SNF1-RELATED PROTEIN KINASE REGULATORY SUBUNIT BETA-1"/>
    <property type="match status" value="1"/>
</dbReference>
<dbReference type="PANTHER" id="PTHR46316:SF9">
    <property type="entry name" value="SNF1-RELATED PROTEIN KINASE REGULATORY SUBUNIT BETA-1"/>
    <property type="match status" value="1"/>
</dbReference>
<dbReference type="Pfam" id="PF16561">
    <property type="entry name" value="AMPK1_CBM"/>
    <property type="match status" value="1"/>
</dbReference>
<dbReference type="Pfam" id="PF04739">
    <property type="entry name" value="AMPKBI"/>
    <property type="match status" value="1"/>
</dbReference>
<dbReference type="SMART" id="SM01010">
    <property type="entry name" value="AMPKBI"/>
    <property type="match status" value="1"/>
</dbReference>
<dbReference type="SUPFAM" id="SSF160219">
    <property type="entry name" value="AMPKBI-like"/>
    <property type="match status" value="1"/>
</dbReference>
<dbReference type="SUPFAM" id="SSF81296">
    <property type="entry name" value="E set domains"/>
    <property type="match status" value="1"/>
</dbReference>
<sequence>MGNANGKDEDAAAGSGGADVTSSSARSNGGDPSARSRHRRPSSDSMSSSPPGSPARSPSPFLFAPQVPVAPLQRANAPPPNNIQWNQSQRVFDNPPEQGIPTIITWNQGGNDVAVEGSWDNWRSRKKLQKSGKDHSILFVLPSGIYHYKVIVDGESKYIPDLPFVADEVGNVCNILDVHNFVPENPESIVEFEAPPSPDHSYGQTLPAAEDYAKEPLAVPPQLHLTLLGTTEETAIATKPQHVVLNHVFIEQGWTPQSIVALGLTHRFESKYITVVLYKPLTR</sequence>
<feature type="initiator methionine" description="Removed" evidence="5">
    <location>
        <position position="1"/>
    </location>
</feature>
<feature type="chain" id="PRO_0000204371" description="SNF1-related protein kinase regulatory subunit beta-1">
    <location>
        <begin position="2"/>
        <end position="283"/>
    </location>
</feature>
<feature type="region of interest" description="Disordered" evidence="1">
    <location>
        <begin position="1"/>
        <end position="63"/>
    </location>
</feature>
<feature type="region of interest" description="Kinase-interacting sequence (KIS)">
    <location>
        <begin position="101"/>
        <end position="178"/>
    </location>
</feature>
<feature type="region of interest" description="Association with SNF1 complex (ASC)">
    <location>
        <begin position="215"/>
        <end position="283"/>
    </location>
</feature>
<feature type="compositionally biased region" description="Basic and acidic residues" evidence="1">
    <location>
        <begin position="1"/>
        <end position="10"/>
    </location>
</feature>
<feature type="compositionally biased region" description="Low complexity" evidence="1">
    <location>
        <begin position="43"/>
        <end position="60"/>
    </location>
</feature>
<feature type="lipid moiety-binding region" description="N-myristoyl glycine" evidence="5">
    <location>
        <position position="2"/>
    </location>
</feature>
<feature type="mutagenesis site" description="Loss of plasma membrane localization." evidence="5">
    <original>G</original>
    <variation>A</variation>
    <location>
        <position position="2"/>
    </location>
</feature>
<feature type="sequence conflict" description="In Ref. 1; CAB64718 and 4; AAM65684." evidence="10" ref="1 4">
    <original>P</original>
    <variation>PS</variation>
    <location>
        <position position="79"/>
    </location>
</feature>
<feature type="sequence conflict" description="In Ref. 1; CAB64718 and 4; AAM65684." evidence="10" ref="1 4">
    <original>A</original>
    <variation>T</variation>
    <location>
        <position position="114"/>
    </location>
</feature>
<name>KINB1_ARATH</name>
<protein>
    <recommendedName>
        <fullName>SNF1-related protein kinase regulatory subunit beta-1</fullName>
        <shortName>AKIN subunit beta-1</shortName>
        <shortName>AKINB1</shortName>
        <shortName>AKINbeta1</shortName>
    </recommendedName>
</protein>
<accession>Q84VQ1</accession>
<accession>Q9SCY6</accession>
<comment type="function">
    <text>Regulatory subunit of the probable trimeric SNF1-related protein kinase (SnRK) complex, which may play a role in a signal transduction cascade regulating gene expression and carbohydrate metabolism in higher plants. The SnRK complex may also be involved in the regulation of fatty acid synthesis by phosphorylation of acetyl-CoA carboxylase and in assimilation of nitrogen by phosphorylating nitrate reductase.</text>
</comment>
<comment type="subunit">
    <text evidence="2 4 6 7 9">Subunit of a probable heterotrimeric complex consisting of an alpha catalytic (KIN10 or KIN11) subunit, and a beta (KINB) and a gamma (KING or SNF4) non-catalytic regulatory subunits (PubMed:17028154, PubMed:25736509). Interacts with SNF4 and CBL1. Interacts with FLZ1, FLZ2, FLZ8, FLZ9, FLZ10, FLZ12, FLZ13, FLZ14 and FLZ15 (PubMed:29945970).</text>
</comment>
<comment type="interaction">
    <interactant intactId="EBI-2042415">
        <id>Q84VQ1</id>
    </interactant>
    <interactant intactId="EBI-307202">
        <id>P92958</id>
        <label>KIN11</label>
    </interactant>
    <organismsDiffer>false</organismsDiffer>
    <experiments>9</experiments>
</comment>
<comment type="interaction">
    <interactant intactId="EBI-2042415">
        <id>Q84VQ1</id>
    </interactant>
    <interactant intactId="EBI-2360649">
        <id>Q944A6</id>
        <label>SNF4</label>
    </interactant>
    <organismsDiffer>false</organismsDiffer>
    <experiments>20</experiments>
</comment>
<comment type="subcellular location">
    <subcellularLocation>
        <location evidence="5">Cell membrane</location>
    </subcellularLocation>
</comment>
<comment type="alternative products">
    <event type="alternative splicing"/>
    <isoform>
        <id>Q84VQ1-1</id>
        <name>1</name>
        <sequence type="displayed"/>
    </isoform>
    <text>A number of isoforms are produced. According to EST sequences.</text>
</comment>
<comment type="tissue specificity">
    <text evidence="2">Expressed in vegetative organs and, to lower extent, in reproductive organs.</text>
</comment>
<comment type="induction">
    <text evidence="2">Rapidly and strongly induced in the dark, quickly repressed by light.</text>
</comment>
<comment type="domain">
    <text evidence="3">Kinase-interacting sequence (KIS) is specific for the alpha catalytic subunit interaction and Association with SNF1 Complex (ASC) is specific for the gamma non-catalytic regulatory subunit interaction.</text>
</comment>
<comment type="PTM">
    <text evidence="8">Sumoylated by SIZ1.</text>
</comment>
<comment type="similarity">
    <text evidence="10">Belongs to the 5'-AMP-activated protein kinase beta subunit family.</text>
</comment>